<keyword id="KW-0963">Cytoplasm</keyword>
<keyword id="KW-0539">Nucleus</keyword>
<keyword id="KW-1185">Reference proteome</keyword>
<keyword id="KW-0819">tRNA processing</keyword>
<sequence>MTTPRVPTTFTRKVAGGVKTTTTGSSLPTNNTSTTTTTTTTAAKKLPNGCKISIKNSNLLTSTGLTDLDDIIGGGIPIGSILMIEEDINSSYYMFLLKYFLAEGVLQQQGVFFSSLIGIDPFEILNKLPARITKEEEIEADKNDTTNNINTNINTNNNNKQPTDELKIAWRYQQYVSNELSKQQQQQSASTIMNQTFCHSYDFTRKMNVQSMNPELIHTLSHDAQSQAEGTSPYRNLFLEIQNLVYKYNKEAAMNPDQTRVLRLCIQSFSSPLWSNDEEGVIEFLHALKGLLRSSVATCVISVPTYIYSGAFVKKIAHLCDTVVSINSFSGLGGETPEQFAEYLGLFNIRKIARLNTLSLSFHPDMLTFVFKMKRRKMCIETIHLPPESSRAGDSKPDNNDSNKNKSDQNNIVSKMKSGSGLLCGGGGGGSSNNNPLDF</sequence>
<reference key="1">
    <citation type="journal article" date="2005" name="Nature">
        <title>The genome of the social amoeba Dictyostelium discoideum.</title>
        <authorList>
            <person name="Eichinger L."/>
            <person name="Pachebat J.A."/>
            <person name="Gloeckner G."/>
            <person name="Rajandream M.A."/>
            <person name="Sucgang R."/>
            <person name="Berriman M."/>
            <person name="Song J."/>
            <person name="Olsen R."/>
            <person name="Szafranski K."/>
            <person name="Xu Q."/>
            <person name="Tunggal B."/>
            <person name="Kummerfeld S."/>
            <person name="Madera M."/>
            <person name="Konfortov B.A."/>
            <person name="Rivero F."/>
            <person name="Bankier A.T."/>
            <person name="Lehmann R."/>
            <person name="Hamlin N."/>
            <person name="Davies R."/>
            <person name="Gaudet P."/>
            <person name="Fey P."/>
            <person name="Pilcher K."/>
            <person name="Chen G."/>
            <person name="Saunders D."/>
            <person name="Sodergren E.J."/>
            <person name="Davis P."/>
            <person name="Kerhornou A."/>
            <person name="Nie X."/>
            <person name="Hall N."/>
            <person name="Anjard C."/>
            <person name="Hemphill L."/>
            <person name="Bason N."/>
            <person name="Farbrother P."/>
            <person name="Desany B."/>
            <person name="Just E."/>
            <person name="Morio T."/>
            <person name="Rost R."/>
            <person name="Churcher C.M."/>
            <person name="Cooper J."/>
            <person name="Haydock S."/>
            <person name="van Driessche N."/>
            <person name="Cronin A."/>
            <person name="Goodhead I."/>
            <person name="Muzny D.M."/>
            <person name="Mourier T."/>
            <person name="Pain A."/>
            <person name="Lu M."/>
            <person name="Harper D."/>
            <person name="Lindsay R."/>
            <person name="Hauser H."/>
            <person name="James K.D."/>
            <person name="Quiles M."/>
            <person name="Madan Babu M."/>
            <person name="Saito T."/>
            <person name="Buchrieser C."/>
            <person name="Wardroper A."/>
            <person name="Felder M."/>
            <person name="Thangavelu M."/>
            <person name="Johnson D."/>
            <person name="Knights A."/>
            <person name="Loulseged H."/>
            <person name="Mungall K.L."/>
            <person name="Oliver K."/>
            <person name="Price C."/>
            <person name="Quail M.A."/>
            <person name="Urushihara H."/>
            <person name="Hernandez J."/>
            <person name="Rabbinowitsch E."/>
            <person name="Steffen D."/>
            <person name="Sanders M."/>
            <person name="Ma J."/>
            <person name="Kohara Y."/>
            <person name="Sharp S."/>
            <person name="Simmonds M.N."/>
            <person name="Spiegler S."/>
            <person name="Tivey A."/>
            <person name="Sugano S."/>
            <person name="White B."/>
            <person name="Walker D."/>
            <person name="Woodward J.R."/>
            <person name="Winckler T."/>
            <person name="Tanaka Y."/>
            <person name="Shaulsky G."/>
            <person name="Schleicher M."/>
            <person name="Weinstock G.M."/>
            <person name="Rosenthal A."/>
            <person name="Cox E.C."/>
            <person name="Chisholm R.L."/>
            <person name="Gibbs R.A."/>
            <person name="Loomis W.F."/>
            <person name="Platzer M."/>
            <person name="Kay R.R."/>
            <person name="Williams J.G."/>
            <person name="Dear P.H."/>
            <person name="Noegel A.A."/>
            <person name="Barrell B.G."/>
            <person name="Kuspa A."/>
        </authorList>
    </citation>
    <scope>NUCLEOTIDE SEQUENCE [LARGE SCALE GENOMIC DNA]</scope>
    <source>
        <strain>AX4</strain>
    </source>
</reference>
<organism>
    <name type="scientific">Dictyostelium discoideum</name>
    <name type="common">Social amoeba</name>
    <dbReference type="NCBI Taxonomy" id="44689"/>
    <lineage>
        <taxon>Eukaryota</taxon>
        <taxon>Amoebozoa</taxon>
        <taxon>Evosea</taxon>
        <taxon>Eumycetozoa</taxon>
        <taxon>Dictyostelia</taxon>
        <taxon>Dictyosteliales</taxon>
        <taxon>Dictyosteliaceae</taxon>
        <taxon>Dictyostelium</taxon>
    </lineage>
</organism>
<dbReference type="EMBL" id="AAFI02000024">
    <property type="protein sequence ID" value="EAL67993.1"/>
    <property type="molecule type" value="Genomic_DNA"/>
</dbReference>
<dbReference type="RefSeq" id="XP_641960.1">
    <property type="nucleotide sequence ID" value="XM_636868.1"/>
</dbReference>
<dbReference type="SMR" id="Q54XS0"/>
<dbReference type="FunCoup" id="Q54XS0">
    <property type="interactions" value="738"/>
</dbReference>
<dbReference type="STRING" id="44689.Q54XS0"/>
<dbReference type="PaxDb" id="44689-DDB0216343"/>
<dbReference type="EnsemblProtists" id="EAL67993">
    <property type="protein sequence ID" value="EAL67993"/>
    <property type="gene ID" value="DDB_G0278783"/>
</dbReference>
<dbReference type="GeneID" id="8621692"/>
<dbReference type="KEGG" id="ddi:DDB_G0278783"/>
<dbReference type="dictyBase" id="DDB_G0278783">
    <property type="gene designation" value="elp4"/>
</dbReference>
<dbReference type="VEuPathDB" id="AmoebaDB:DDB_G0278783"/>
<dbReference type="eggNOG" id="KOG3949">
    <property type="taxonomic scope" value="Eukaryota"/>
</dbReference>
<dbReference type="HOGENOM" id="CLU_031345_3_1_1"/>
<dbReference type="InParanoid" id="Q54XS0"/>
<dbReference type="OMA" id="NTTMWDD"/>
<dbReference type="PhylomeDB" id="Q54XS0"/>
<dbReference type="UniPathway" id="UPA00988"/>
<dbReference type="PRO" id="PR:Q54XS0"/>
<dbReference type="Proteomes" id="UP000002195">
    <property type="component" value="Chromosome 3"/>
</dbReference>
<dbReference type="GO" id="GO:0005737">
    <property type="term" value="C:cytoplasm"/>
    <property type="evidence" value="ECO:0000250"/>
    <property type="project" value="UniProtKB"/>
</dbReference>
<dbReference type="GO" id="GO:0033588">
    <property type="term" value="C:elongator holoenzyme complex"/>
    <property type="evidence" value="ECO:0000318"/>
    <property type="project" value="GO_Central"/>
</dbReference>
<dbReference type="GO" id="GO:0008023">
    <property type="term" value="C:transcription elongation factor complex"/>
    <property type="evidence" value="ECO:0000250"/>
    <property type="project" value="UniProtKB"/>
</dbReference>
<dbReference type="GO" id="GO:0008607">
    <property type="term" value="F:phosphorylase kinase regulator activity"/>
    <property type="evidence" value="ECO:0000250"/>
    <property type="project" value="UniProtKB"/>
</dbReference>
<dbReference type="GO" id="GO:0006357">
    <property type="term" value="P:regulation of transcription by RNA polymerase II"/>
    <property type="evidence" value="ECO:0000250"/>
    <property type="project" value="UniProtKB"/>
</dbReference>
<dbReference type="GO" id="GO:0002098">
    <property type="term" value="P:tRNA wobble uridine modification"/>
    <property type="evidence" value="ECO:0000318"/>
    <property type="project" value="GO_Central"/>
</dbReference>
<dbReference type="CDD" id="cd19494">
    <property type="entry name" value="Elp4"/>
    <property type="match status" value="1"/>
</dbReference>
<dbReference type="FunFam" id="3.40.50.300:FF:003211">
    <property type="entry name" value="Elongator complex protein, putative"/>
    <property type="match status" value="1"/>
</dbReference>
<dbReference type="Gene3D" id="3.40.50.300">
    <property type="entry name" value="P-loop containing nucleotide triphosphate hydrolases"/>
    <property type="match status" value="1"/>
</dbReference>
<dbReference type="InterPro" id="IPR008728">
    <property type="entry name" value="Elongator_complex_protein_4"/>
</dbReference>
<dbReference type="InterPro" id="IPR027417">
    <property type="entry name" value="P-loop_NTPase"/>
</dbReference>
<dbReference type="PANTHER" id="PTHR12896:SF1">
    <property type="entry name" value="ELONGATOR COMPLEX PROTEIN 4"/>
    <property type="match status" value="1"/>
</dbReference>
<dbReference type="PANTHER" id="PTHR12896">
    <property type="entry name" value="PAX6 NEIGHBOR PROTEIN PAXNEB"/>
    <property type="match status" value="1"/>
</dbReference>
<dbReference type="Pfam" id="PF05625">
    <property type="entry name" value="PAXNEB"/>
    <property type="match status" value="1"/>
</dbReference>
<gene>
    <name type="primary">elp4</name>
    <name type="ORF">DDB_G0278783</name>
</gene>
<protein>
    <recommendedName>
        <fullName>Elongator complex protein 4</fullName>
        <shortName>ELP4</shortName>
    </recommendedName>
</protein>
<accession>Q54XS0</accession>
<evidence type="ECO:0000250" key="1">
    <source>
        <dbReference type="UniProtKB" id="Q96EB1"/>
    </source>
</evidence>
<evidence type="ECO:0000256" key="2">
    <source>
        <dbReference type="SAM" id="MobiDB-lite"/>
    </source>
</evidence>
<evidence type="ECO:0000305" key="3"/>
<name>ELP4_DICDI</name>
<feature type="chain" id="PRO_0000328080" description="Elongator complex protein 4">
    <location>
        <begin position="1"/>
        <end position="439"/>
    </location>
</feature>
<feature type="region of interest" description="Disordered" evidence="2">
    <location>
        <begin position="386"/>
        <end position="439"/>
    </location>
</feature>
<feature type="compositionally biased region" description="Basic and acidic residues" evidence="2">
    <location>
        <begin position="391"/>
        <end position="407"/>
    </location>
</feature>
<feature type="compositionally biased region" description="Gly residues" evidence="2">
    <location>
        <begin position="422"/>
        <end position="431"/>
    </location>
</feature>
<comment type="function">
    <text evidence="1">Component of the elongator complex which is required for multiple tRNA modifications, including mcm5U (5-methoxycarbonylmethyl uridine), mcm5s2U (5-methoxycarbonylmethyl-2-thiouridine), and ncm5U (5-carbamoylmethyl uridine). The elongator complex catalyzes the formation of carboxymethyluridine in the wobble base at position 34 in tRNAs.</text>
</comment>
<comment type="pathway">
    <text evidence="1">tRNA modification; 5-methoxycarbonylmethyl-2-thiouridine-tRNA biosynthesis.</text>
</comment>
<comment type="subunit">
    <text evidence="1">Component of the elongator complex.</text>
</comment>
<comment type="subcellular location">
    <subcellularLocation>
        <location evidence="1">Cytoplasm</location>
    </subcellularLocation>
    <subcellularLocation>
        <location evidence="1">Nucleus</location>
    </subcellularLocation>
</comment>
<comment type="similarity">
    <text evidence="3">Belongs to the ELP4 family.</text>
</comment>
<comment type="caution">
    <text evidence="1">The elongator complex was originally thought to play a role in transcription elongation. However, it is no longer thought to play a direct role in this process and its primary function is thought to be in tRNA modification.</text>
</comment>
<proteinExistence type="inferred from homology"/>